<evidence type="ECO:0000255" key="1"/>
<evidence type="ECO:0000256" key="2">
    <source>
        <dbReference type="SAM" id="MobiDB-lite"/>
    </source>
</evidence>
<evidence type="ECO:0000269" key="3">
    <source>
    </source>
</evidence>
<evidence type="ECO:0000269" key="4">
    <source>
    </source>
</evidence>
<evidence type="ECO:0000305" key="5"/>
<evidence type="ECO:0000312" key="6">
    <source>
        <dbReference type="EMBL" id="AAI32047.1"/>
    </source>
</evidence>
<evidence type="ECO:0000312" key="7">
    <source>
        <dbReference type="EMBL" id="AAI32049.1"/>
    </source>
</evidence>
<evidence type="ECO:0000312" key="8">
    <source>
        <dbReference type="EMBL" id="AAX23973.1"/>
    </source>
</evidence>
<evidence type="ECO:0000312" key="9">
    <source>
        <dbReference type="EMBL" id="BAB30857.1"/>
    </source>
</evidence>
<evidence type="ECO:0000312" key="10">
    <source>
        <dbReference type="EMBL" id="BAB30928.1"/>
    </source>
</evidence>
<evidence type="ECO:0000312" key="11">
    <source>
        <dbReference type="EMBL" id="EDL05079.1"/>
    </source>
</evidence>
<evidence type="ECO:0000312" key="12">
    <source>
        <dbReference type="MGI" id="MGI:1913900"/>
    </source>
</evidence>
<evidence type="ECO:0000312" key="13">
    <source>
        <dbReference type="Proteomes" id="UP000000589"/>
    </source>
</evidence>
<feature type="signal peptide" evidence="1">
    <location>
        <begin position="1"/>
        <end position="19"/>
    </location>
</feature>
<feature type="chain" id="PRO_5004324983" description="Nephrocan">
    <location>
        <begin position="20"/>
        <end position="512"/>
    </location>
</feature>
<feature type="domain" description="LRRNT" evidence="5">
    <location>
        <begin position="20"/>
        <end position="44"/>
    </location>
</feature>
<feature type="repeat" description="LRR 1" evidence="1">
    <location>
        <begin position="45"/>
        <end position="69"/>
    </location>
</feature>
<feature type="repeat" description="LRR 2" evidence="1">
    <location>
        <begin position="71"/>
        <end position="93"/>
    </location>
</feature>
<feature type="repeat" description="LRR 3" evidence="1">
    <location>
        <begin position="94"/>
        <end position="117"/>
    </location>
</feature>
<feature type="repeat" description="LRR 4" evidence="1">
    <location>
        <begin position="119"/>
        <end position="138"/>
    </location>
</feature>
<feature type="repeat" description="LRR 5" evidence="1">
    <location>
        <begin position="139"/>
        <end position="162"/>
    </location>
</feature>
<feature type="repeat" description="LRR 6" evidence="1">
    <location>
        <begin position="164"/>
        <end position="185"/>
    </location>
</feature>
<feature type="repeat" description="LRR 7" evidence="1">
    <location>
        <begin position="186"/>
        <end position="208"/>
    </location>
</feature>
<feature type="repeat" description="LRR 8" evidence="1">
    <location>
        <begin position="210"/>
        <end position="232"/>
    </location>
</feature>
<feature type="repeat" description="LRR 9" evidence="1">
    <location>
        <begin position="234"/>
        <end position="253"/>
    </location>
</feature>
<feature type="repeat" description="LRR 10" evidence="1">
    <location>
        <begin position="254"/>
        <end position="276"/>
    </location>
</feature>
<feature type="repeat" description="LRR 11" evidence="1">
    <location>
        <begin position="277"/>
        <end position="299"/>
    </location>
</feature>
<feature type="repeat" description="LRR 12" evidence="1">
    <location>
        <begin position="301"/>
        <end position="320"/>
    </location>
</feature>
<feature type="repeat" description="LRR 13" evidence="1">
    <location>
        <begin position="321"/>
        <end position="344"/>
    </location>
</feature>
<feature type="repeat" description="LRR 14" evidence="1">
    <location>
        <begin position="346"/>
        <end position="371"/>
    </location>
</feature>
<feature type="repeat" description="LRR 15" evidence="1">
    <location>
        <begin position="373"/>
        <end position="389"/>
    </location>
</feature>
<feature type="repeat" description="LRR 16" evidence="1">
    <location>
        <begin position="390"/>
        <end position="413"/>
    </location>
</feature>
<feature type="repeat" description="LRR 17" evidence="1">
    <location>
        <begin position="415"/>
        <end position="442"/>
    </location>
</feature>
<feature type="region of interest" description="Disordered" evidence="2">
    <location>
        <begin position="474"/>
        <end position="512"/>
    </location>
</feature>
<feature type="compositionally biased region" description="Basic and acidic residues" evidence="2">
    <location>
        <begin position="474"/>
        <end position="484"/>
    </location>
</feature>
<feature type="compositionally biased region" description="Acidic residues" evidence="2">
    <location>
        <begin position="503"/>
        <end position="512"/>
    </location>
</feature>
<feature type="glycosylation site" description="N-linked (GlcNAc...) asparagine" evidence="1">
    <location>
        <position position="66"/>
    </location>
</feature>
<sequence>MHPLWAFLLGLSLTNGLSANCPGRCSCDSMQSVQCYRLMELPSGIPSTTKRLYISHSRIQHLQLSNFTGLLALEDFILLASGTESIENDTFKTLSTLKTLELWKNKLRQVPSALPANLEVLKLNDNAICALRGSEFEGLKNLKVLELKNNLISSLSPSMLSPLASLQSLMVDGNNIESVVGPLSLPHLKYMSMENNQLHLIPGNVFTSLQNLQFLSFSGNFLTKIPINLPKSLLSLKMERNQLKVVRFRDMKHLENLSHLYLSENFLSSIDGAQQLTNLTTLEVSQNQLQMLPPRLPSRLQKLDCSSNFIQRVTAPEFQDLRDLKHLFLDNNVVSLFEAGALQRCSQLSNLALEQNLLLSIPLRLPKTLARLDLKGNAIQDMAERELRDLKQLQVLNLRNNRISALDFKALEGLPRLRHLYLDGNPWNCTCSLLRAREVLKAKGTDVKGGQCAAPAERQGESWMSSKKILRQCEHHLQQSEKSKETKKKPKPEDSSSIRLNMDDDDDDYEID</sequence>
<name>NEPN_MOUSE</name>
<keyword id="KW-0325">Glycoprotein</keyword>
<keyword id="KW-0433">Leucine-rich repeat</keyword>
<keyword id="KW-1185">Reference proteome</keyword>
<keyword id="KW-0677">Repeat</keyword>
<keyword id="KW-0964">Secreted</keyword>
<keyword id="KW-0732">Signal</keyword>
<reference evidence="8" key="1">
    <citation type="journal article" date="2006" name="J. Biol. Chem.">
        <title>Nephrocan, a novel member of the small leucine-rich repeat protein family, is an inhibitor of transforming growth factor-beta signaling.</title>
        <authorList>
            <person name="Mochida Y."/>
            <person name="Parisuthiman D."/>
            <person name="Kaku M."/>
            <person name="Hanai J."/>
            <person name="Sukhatme V.P."/>
            <person name="Yamauchi M."/>
        </authorList>
    </citation>
    <scope>NUCLEOTIDE SEQUENCE [MRNA]</scope>
    <scope>FUNCTION</scope>
    <scope>SUBCELLULAR LOCATION</scope>
    <scope>TISSUE SPECIFICITY</scope>
    <scope>DEVELOPMENTAL STAGE</scope>
    <scope>GLYCOSYLATION</scope>
    <source>
        <strain evidence="8">NIH-III</strain>
        <tissue evidence="8">Kidney</tissue>
    </source>
</reference>
<reference evidence="9 10" key="2">
    <citation type="journal article" date="2005" name="Science">
        <title>The transcriptional landscape of the mammalian genome.</title>
        <authorList>
            <person name="Carninci P."/>
            <person name="Kasukawa T."/>
            <person name="Katayama S."/>
            <person name="Gough J."/>
            <person name="Frith M.C."/>
            <person name="Maeda N."/>
            <person name="Oyama R."/>
            <person name="Ravasi T."/>
            <person name="Lenhard B."/>
            <person name="Wells C."/>
            <person name="Kodzius R."/>
            <person name="Shimokawa K."/>
            <person name="Bajic V.B."/>
            <person name="Brenner S.E."/>
            <person name="Batalov S."/>
            <person name="Forrest A.R."/>
            <person name="Zavolan M."/>
            <person name="Davis M.J."/>
            <person name="Wilming L.G."/>
            <person name="Aidinis V."/>
            <person name="Allen J.E."/>
            <person name="Ambesi-Impiombato A."/>
            <person name="Apweiler R."/>
            <person name="Aturaliya R.N."/>
            <person name="Bailey T.L."/>
            <person name="Bansal M."/>
            <person name="Baxter L."/>
            <person name="Beisel K.W."/>
            <person name="Bersano T."/>
            <person name="Bono H."/>
            <person name="Chalk A.M."/>
            <person name="Chiu K.P."/>
            <person name="Choudhary V."/>
            <person name="Christoffels A."/>
            <person name="Clutterbuck D.R."/>
            <person name="Crowe M.L."/>
            <person name="Dalla E."/>
            <person name="Dalrymple B.P."/>
            <person name="de Bono B."/>
            <person name="Della Gatta G."/>
            <person name="di Bernardo D."/>
            <person name="Down T."/>
            <person name="Engstrom P."/>
            <person name="Fagiolini M."/>
            <person name="Faulkner G."/>
            <person name="Fletcher C.F."/>
            <person name="Fukushima T."/>
            <person name="Furuno M."/>
            <person name="Futaki S."/>
            <person name="Gariboldi M."/>
            <person name="Georgii-Hemming P."/>
            <person name="Gingeras T.R."/>
            <person name="Gojobori T."/>
            <person name="Green R.E."/>
            <person name="Gustincich S."/>
            <person name="Harbers M."/>
            <person name="Hayashi Y."/>
            <person name="Hensch T.K."/>
            <person name="Hirokawa N."/>
            <person name="Hill D."/>
            <person name="Huminiecki L."/>
            <person name="Iacono M."/>
            <person name="Ikeo K."/>
            <person name="Iwama A."/>
            <person name="Ishikawa T."/>
            <person name="Jakt M."/>
            <person name="Kanapin A."/>
            <person name="Katoh M."/>
            <person name="Kawasawa Y."/>
            <person name="Kelso J."/>
            <person name="Kitamura H."/>
            <person name="Kitano H."/>
            <person name="Kollias G."/>
            <person name="Krishnan S.P."/>
            <person name="Kruger A."/>
            <person name="Kummerfeld S.K."/>
            <person name="Kurochkin I.V."/>
            <person name="Lareau L.F."/>
            <person name="Lazarevic D."/>
            <person name="Lipovich L."/>
            <person name="Liu J."/>
            <person name="Liuni S."/>
            <person name="McWilliam S."/>
            <person name="Madan Babu M."/>
            <person name="Madera M."/>
            <person name="Marchionni L."/>
            <person name="Matsuda H."/>
            <person name="Matsuzawa S."/>
            <person name="Miki H."/>
            <person name="Mignone F."/>
            <person name="Miyake S."/>
            <person name="Morris K."/>
            <person name="Mottagui-Tabar S."/>
            <person name="Mulder N."/>
            <person name="Nakano N."/>
            <person name="Nakauchi H."/>
            <person name="Ng P."/>
            <person name="Nilsson R."/>
            <person name="Nishiguchi S."/>
            <person name="Nishikawa S."/>
            <person name="Nori F."/>
            <person name="Ohara O."/>
            <person name="Okazaki Y."/>
            <person name="Orlando V."/>
            <person name="Pang K.C."/>
            <person name="Pavan W.J."/>
            <person name="Pavesi G."/>
            <person name="Pesole G."/>
            <person name="Petrovsky N."/>
            <person name="Piazza S."/>
            <person name="Reed J."/>
            <person name="Reid J.F."/>
            <person name="Ring B.Z."/>
            <person name="Ringwald M."/>
            <person name="Rost B."/>
            <person name="Ruan Y."/>
            <person name="Salzberg S.L."/>
            <person name="Sandelin A."/>
            <person name="Schneider C."/>
            <person name="Schoenbach C."/>
            <person name="Sekiguchi K."/>
            <person name="Semple C.A."/>
            <person name="Seno S."/>
            <person name="Sessa L."/>
            <person name="Sheng Y."/>
            <person name="Shibata Y."/>
            <person name="Shimada H."/>
            <person name="Shimada K."/>
            <person name="Silva D."/>
            <person name="Sinclair B."/>
            <person name="Sperling S."/>
            <person name="Stupka E."/>
            <person name="Sugiura K."/>
            <person name="Sultana R."/>
            <person name="Takenaka Y."/>
            <person name="Taki K."/>
            <person name="Tammoja K."/>
            <person name="Tan S.L."/>
            <person name="Tang S."/>
            <person name="Taylor M.S."/>
            <person name="Tegner J."/>
            <person name="Teichmann S.A."/>
            <person name="Ueda H.R."/>
            <person name="van Nimwegen E."/>
            <person name="Verardo R."/>
            <person name="Wei C.L."/>
            <person name="Yagi K."/>
            <person name="Yamanishi H."/>
            <person name="Zabarovsky E."/>
            <person name="Zhu S."/>
            <person name="Zimmer A."/>
            <person name="Hide W."/>
            <person name="Bult C."/>
            <person name="Grimmond S.M."/>
            <person name="Teasdale R.D."/>
            <person name="Liu E.T."/>
            <person name="Brusic V."/>
            <person name="Quackenbush J."/>
            <person name="Wahlestedt C."/>
            <person name="Mattick J.S."/>
            <person name="Hume D.A."/>
            <person name="Kai C."/>
            <person name="Sasaki D."/>
            <person name="Tomaru Y."/>
            <person name="Fukuda S."/>
            <person name="Kanamori-Katayama M."/>
            <person name="Suzuki M."/>
            <person name="Aoki J."/>
            <person name="Arakawa T."/>
            <person name="Iida J."/>
            <person name="Imamura K."/>
            <person name="Itoh M."/>
            <person name="Kato T."/>
            <person name="Kawaji H."/>
            <person name="Kawagashira N."/>
            <person name="Kawashima T."/>
            <person name="Kojima M."/>
            <person name="Kondo S."/>
            <person name="Konno H."/>
            <person name="Nakano K."/>
            <person name="Ninomiya N."/>
            <person name="Nishio T."/>
            <person name="Okada M."/>
            <person name="Plessy C."/>
            <person name="Shibata K."/>
            <person name="Shiraki T."/>
            <person name="Suzuki S."/>
            <person name="Tagami M."/>
            <person name="Waki K."/>
            <person name="Watahiki A."/>
            <person name="Okamura-Oho Y."/>
            <person name="Suzuki H."/>
            <person name="Kawai J."/>
            <person name="Hayashizaki Y."/>
        </authorList>
    </citation>
    <scope>NUCLEOTIDE SEQUENCE [LARGE SCALE MRNA]</scope>
    <source>
        <strain>C57BL/6J</strain>
    </source>
</reference>
<reference evidence="13" key="3">
    <citation type="journal article" date="2009" name="PLoS Biol.">
        <title>Lineage-specific biology revealed by a finished genome assembly of the mouse.</title>
        <authorList>
            <person name="Church D.M."/>
            <person name="Goodstadt L."/>
            <person name="Hillier L.W."/>
            <person name="Zody M.C."/>
            <person name="Goldstein S."/>
            <person name="She X."/>
            <person name="Bult C.J."/>
            <person name="Agarwala R."/>
            <person name="Cherry J.L."/>
            <person name="DiCuccio M."/>
            <person name="Hlavina W."/>
            <person name="Kapustin Y."/>
            <person name="Meric P."/>
            <person name="Maglott D."/>
            <person name="Birtle Z."/>
            <person name="Marques A.C."/>
            <person name="Graves T."/>
            <person name="Zhou S."/>
            <person name="Teague B."/>
            <person name="Potamousis K."/>
            <person name="Churas C."/>
            <person name="Place M."/>
            <person name="Herschleb J."/>
            <person name="Runnheim R."/>
            <person name="Forrest D."/>
            <person name="Amos-Landgraf J."/>
            <person name="Schwartz D.C."/>
            <person name="Cheng Z."/>
            <person name="Lindblad-Toh K."/>
            <person name="Eichler E.E."/>
            <person name="Ponting C.P."/>
        </authorList>
    </citation>
    <scope>NUCLEOTIDE SEQUENCE [LARGE SCALE GENOMIC DNA]</scope>
    <source>
        <strain>C57BL/6J</strain>
    </source>
</reference>
<reference evidence="11" key="4">
    <citation type="submission" date="2005-07" db="EMBL/GenBank/DDBJ databases">
        <authorList>
            <person name="Mural R.J."/>
            <person name="Adams M.D."/>
            <person name="Myers E.W."/>
            <person name="Smith H.O."/>
            <person name="Venter J.C."/>
        </authorList>
    </citation>
    <scope>NUCLEOTIDE SEQUENCE [LARGE SCALE GENOMIC DNA]</scope>
</reference>
<reference evidence="6 7" key="5">
    <citation type="journal article" date="2004" name="Genome Res.">
        <title>The status, quality, and expansion of the NIH full-length cDNA project: the Mammalian Gene Collection (MGC).</title>
        <authorList>
            <consortium name="The MGC Project Team"/>
        </authorList>
    </citation>
    <scope>NUCLEOTIDE SEQUENCE [LARGE SCALE MRNA]</scope>
</reference>
<reference evidence="5" key="6">
    <citation type="journal article" date="2007" name="BMC Dev. Biol.">
        <title>A systematic screen for genes expressed in definitive endoderm by Serial Analysis of Gene Expression (SAGE).</title>
        <authorList>
            <person name="Hou J."/>
            <person name="Charters A.M."/>
            <person name="Lee S.C."/>
            <person name="Zhao Y."/>
            <person name="Wu M.K."/>
            <person name="Jones S.J."/>
            <person name="Marra M.A."/>
            <person name="Hoodless P.A."/>
        </authorList>
    </citation>
    <scope>DEVELOPMENTAL STAGE</scope>
</reference>
<dbReference type="EMBL" id="AY938536">
    <property type="protein sequence ID" value="AAX23973.1"/>
    <property type="molecule type" value="mRNA"/>
</dbReference>
<dbReference type="EMBL" id="AK017656">
    <property type="protein sequence ID" value="BAB30857.1"/>
    <property type="molecule type" value="mRNA"/>
</dbReference>
<dbReference type="EMBL" id="AK017780">
    <property type="protein sequence ID" value="BAB30928.1"/>
    <property type="molecule type" value="mRNA"/>
</dbReference>
<dbReference type="EMBL" id="AC153526">
    <property type="status" value="NOT_ANNOTATED_CDS"/>
    <property type="molecule type" value="Genomic_DNA"/>
</dbReference>
<dbReference type="EMBL" id="CH466540">
    <property type="protein sequence ID" value="EDL05079.1"/>
    <property type="molecule type" value="Genomic_DNA"/>
</dbReference>
<dbReference type="EMBL" id="BC132046">
    <property type="protein sequence ID" value="AAI32047.1"/>
    <property type="molecule type" value="mRNA"/>
</dbReference>
<dbReference type="EMBL" id="BC132048">
    <property type="protein sequence ID" value="AAI32049.1"/>
    <property type="molecule type" value="mRNA"/>
</dbReference>
<dbReference type="CCDS" id="CCDS23840.1"/>
<dbReference type="RefSeq" id="NP_079960.1">
    <property type="nucleotide sequence ID" value="NM_025684.3"/>
</dbReference>
<dbReference type="SMR" id="Q9CQ76"/>
<dbReference type="FunCoup" id="Q9CQ76">
    <property type="interactions" value="47"/>
</dbReference>
<dbReference type="STRING" id="10090.ENSMUSP00000070130"/>
<dbReference type="GlyCosmos" id="Q9CQ76">
    <property type="glycosylation" value="1 site, No reported glycans"/>
</dbReference>
<dbReference type="GlyGen" id="Q9CQ76">
    <property type="glycosylation" value="1 site"/>
</dbReference>
<dbReference type="PaxDb" id="10090-ENSMUSP00000070130"/>
<dbReference type="ProteomicsDB" id="252948"/>
<dbReference type="Ensembl" id="ENSMUST00000067085.7">
    <property type="protein sequence ID" value="ENSMUSP00000070130.5"/>
    <property type="gene ID" value="ENSMUSG00000038624.14"/>
</dbReference>
<dbReference type="GeneID" id="66650"/>
<dbReference type="KEGG" id="mmu:66650"/>
<dbReference type="UCSC" id="uc007fbh.1">
    <property type="organism name" value="mouse"/>
</dbReference>
<dbReference type="AGR" id="MGI:1913900"/>
<dbReference type="CTD" id="66650"/>
<dbReference type="MGI" id="MGI:1913900">
    <property type="gene designation" value="Nepn"/>
</dbReference>
<dbReference type="VEuPathDB" id="HostDB:ENSMUSG00000038624"/>
<dbReference type="eggNOG" id="KOG0619">
    <property type="taxonomic scope" value="Eukaryota"/>
</dbReference>
<dbReference type="GeneTree" id="ENSGT00940000162914"/>
<dbReference type="HOGENOM" id="CLU_000288_18_6_1"/>
<dbReference type="InParanoid" id="Q9CQ76"/>
<dbReference type="OMA" id="TCPRRCS"/>
<dbReference type="OrthoDB" id="2020019at2759"/>
<dbReference type="PhylomeDB" id="Q9CQ76"/>
<dbReference type="TreeFam" id="TF336377"/>
<dbReference type="BioGRID-ORCS" id="66650">
    <property type="hits" value="1 hit in 76 CRISPR screens"/>
</dbReference>
<dbReference type="PRO" id="PR:Q9CQ76"/>
<dbReference type="Proteomes" id="UP000000589">
    <property type="component" value="Chromosome 10"/>
</dbReference>
<dbReference type="RNAct" id="Q9CQ76">
    <property type="molecule type" value="protein"/>
</dbReference>
<dbReference type="Bgee" id="ENSMUSG00000038624">
    <property type="expression patterns" value="Expressed in pancreatic epithelial bud and 32 other cell types or tissues"/>
</dbReference>
<dbReference type="ExpressionAtlas" id="Q9CQ76">
    <property type="expression patterns" value="baseline and differential"/>
</dbReference>
<dbReference type="GO" id="GO:0031012">
    <property type="term" value="C:extracellular matrix"/>
    <property type="evidence" value="ECO:0000314"/>
    <property type="project" value="MGI"/>
</dbReference>
<dbReference type="GO" id="GO:0005615">
    <property type="term" value="C:extracellular space"/>
    <property type="evidence" value="ECO:0000314"/>
    <property type="project" value="MGI"/>
</dbReference>
<dbReference type="GO" id="GO:0005614">
    <property type="term" value="C:interstitial matrix"/>
    <property type="evidence" value="ECO:0000314"/>
    <property type="project" value="MGI"/>
</dbReference>
<dbReference type="GO" id="GO:0030198">
    <property type="term" value="P:extracellular matrix organization"/>
    <property type="evidence" value="ECO:0000314"/>
    <property type="project" value="MGI"/>
</dbReference>
<dbReference type="GO" id="GO:0000122">
    <property type="term" value="P:negative regulation of transcription by RNA polymerase II"/>
    <property type="evidence" value="ECO:0000314"/>
    <property type="project" value="MGI"/>
</dbReference>
<dbReference type="GO" id="GO:0030512">
    <property type="term" value="P:negative regulation of transforming growth factor beta receptor signaling pathway"/>
    <property type="evidence" value="ECO:0000314"/>
    <property type="project" value="MGI"/>
</dbReference>
<dbReference type="FunFam" id="3.80.10.10:FF:001990">
    <property type="entry name" value="Nephrocan"/>
    <property type="match status" value="1"/>
</dbReference>
<dbReference type="FunFam" id="3.80.10.10:FF:002852">
    <property type="entry name" value="Si:ch211-191d15.2"/>
    <property type="match status" value="1"/>
</dbReference>
<dbReference type="Gene3D" id="3.80.10.10">
    <property type="entry name" value="Ribonuclease Inhibitor"/>
    <property type="match status" value="5"/>
</dbReference>
<dbReference type="InterPro" id="IPR001611">
    <property type="entry name" value="Leu-rich_rpt"/>
</dbReference>
<dbReference type="InterPro" id="IPR025875">
    <property type="entry name" value="Leu-rich_rpt_4"/>
</dbReference>
<dbReference type="InterPro" id="IPR003591">
    <property type="entry name" value="Leu-rich_rpt_typical-subtyp"/>
</dbReference>
<dbReference type="InterPro" id="IPR032675">
    <property type="entry name" value="LRR_dom_sf"/>
</dbReference>
<dbReference type="InterPro" id="IPR050541">
    <property type="entry name" value="LRR_TM_domain-containing"/>
</dbReference>
<dbReference type="PANTHER" id="PTHR24369">
    <property type="entry name" value="ANTIGEN BSP, PUTATIVE-RELATED"/>
    <property type="match status" value="1"/>
</dbReference>
<dbReference type="PANTHER" id="PTHR24369:SF213">
    <property type="entry name" value="INSULIN LIKE GROWTH FACTOR BINDING PROTEIN ACID LABILE SUBUNIT"/>
    <property type="match status" value="1"/>
</dbReference>
<dbReference type="Pfam" id="PF12799">
    <property type="entry name" value="LRR_4"/>
    <property type="match status" value="1"/>
</dbReference>
<dbReference type="Pfam" id="PF13855">
    <property type="entry name" value="LRR_8"/>
    <property type="match status" value="3"/>
</dbReference>
<dbReference type="SMART" id="SM00365">
    <property type="entry name" value="LRR_SD22"/>
    <property type="match status" value="6"/>
</dbReference>
<dbReference type="SMART" id="SM00369">
    <property type="entry name" value="LRR_TYP"/>
    <property type="match status" value="9"/>
</dbReference>
<dbReference type="SUPFAM" id="SSF52058">
    <property type="entry name" value="L domain-like"/>
    <property type="match status" value="2"/>
</dbReference>
<dbReference type="PROSITE" id="PS51450">
    <property type="entry name" value="LRR"/>
    <property type="match status" value="14"/>
</dbReference>
<comment type="function">
    <text evidence="3">May inhibit TGF-beta signaling.</text>
</comment>
<comment type="subcellular location">
    <subcellularLocation>
        <location evidence="3">Secreted</location>
    </subcellularLocation>
</comment>
<comment type="tissue specificity">
    <text evidence="3">Expressed at highest levels in the kidney, where it is primarily detected in the epithelial cells of distal tubules and collecting ducts, and more weakly in proximal epithelial cells. Expressed at lower levels in heart and lung (at protein level). Detected in skeletal muscle.</text>
</comment>
<comment type="developmental stage">
    <text evidence="3 4">Detected in the definitive endoderm from 7.5 dpc onwards (PubMed:17683524). Strongly expressed in the developing midgut by 9 dpc, but then at 9.5 dpc expression appears to decrease (PubMed:17683524). Global expression levels peak during 11 dpc: also detected at slightly lower levels during 7 dpc, 15 dpc and 17 dpc (PubMed:16990280).</text>
</comment>
<comment type="PTM">
    <text evidence="3">N-glycosylated.</text>
</comment>
<comment type="similarity">
    <text evidence="5">Belongs to the small leucine-rich proteoglycan (SLRP) family.</text>
</comment>
<gene>
    <name evidence="12" type="primary">Nepn</name>
</gene>
<accession>Q9CQ76</accession>
<protein>
    <recommendedName>
        <fullName evidence="12">Nephrocan</fullName>
    </recommendedName>
</protein>
<organism>
    <name type="scientific">Mus musculus</name>
    <name type="common">Mouse</name>
    <dbReference type="NCBI Taxonomy" id="10090"/>
    <lineage>
        <taxon>Eukaryota</taxon>
        <taxon>Metazoa</taxon>
        <taxon>Chordata</taxon>
        <taxon>Craniata</taxon>
        <taxon>Vertebrata</taxon>
        <taxon>Euteleostomi</taxon>
        <taxon>Mammalia</taxon>
        <taxon>Eutheria</taxon>
        <taxon>Euarchontoglires</taxon>
        <taxon>Glires</taxon>
        <taxon>Rodentia</taxon>
        <taxon>Myomorpha</taxon>
        <taxon>Muroidea</taxon>
        <taxon>Muridae</taxon>
        <taxon>Murinae</taxon>
        <taxon>Mus</taxon>
        <taxon>Mus</taxon>
    </lineage>
</organism>
<proteinExistence type="evidence at protein level"/>